<gene>
    <name type="primary">GCD2</name>
    <name type="synonym">TIF224</name>
    <name type="ordered locus">YGR083C</name>
</gene>
<organism>
    <name type="scientific">Saccharomyces cerevisiae (strain ATCC 204508 / S288c)</name>
    <name type="common">Baker's yeast</name>
    <dbReference type="NCBI Taxonomy" id="559292"/>
    <lineage>
        <taxon>Eukaryota</taxon>
        <taxon>Fungi</taxon>
        <taxon>Dikarya</taxon>
        <taxon>Ascomycota</taxon>
        <taxon>Saccharomycotina</taxon>
        <taxon>Saccharomycetes</taxon>
        <taxon>Saccharomycetales</taxon>
        <taxon>Saccharomycetaceae</taxon>
        <taxon>Saccharomyces</taxon>
    </lineage>
</organism>
<reference key="1">
    <citation type="journal article" date="1989" name="Genetics">
        <title>Amino acid sequence similarity between GCN3 and GCD2, positive and negative translational regulators of GCN4: evidence for antagonism by competition.</title>
        <authorList>
            <person name="Paddon C.J."/>
            <person name="Hanning E.M."/>
            <person name="Hinnebusch A.G."/>
        </authorList>
    </citation>
    <scope>NUCLEOTIDE SEQUENCE [GENOMIC DNA]</scope>
    <source>
        <strain>S288c / GRF88</strain>
    </source>
</reference>
<reference key="2">
    <citation type="journal article" date="1997" name="Nature">
        <title>The nucleotide sequence of Saccharomyces cerevisiae chromosome VII.</title>
        <authorList>
            <person name="Tettelin H."/>
            <person name="Agostoni-Carbone M.L."/>
            <person name="Albermann K."/>
            <person name="Albers M."/>
            <person name="Arroyo J."/>
            <person name="Backes U."/>
            <person name="Barreiros T."/>
            <person name="Bertani I."/>
            <person name="Bjourson A.J."/>
            <person name="Brueckner M."/>
            <person name="Bruschi C.V."/>
            <person name="Carignani G."/>
            <person name="Castagnoli L."/>
            <person name="Cerdan E."/>
            <person name="Clemente M.L."/>
            <person name="Coblenz A."/>
            <person name="Coglievina M."/>
            <person name="Coissac E."/>
            <person name="Defoor E."/>
            <person name="Del Bino S."/>
            <person name="Delius H."/>
            <person name="Delneri D."/>
            <person name="de Wergifosse P."/>
            <person name="Dujon B."/>
            <person name="Durand P."/>
            <person name="Entian K.-D."/>
            <person name="Eraso P."/>
            <person name="Escribano V."/>
            <person name="Fabiani L."/>
            <person name="Fartmann B."/>
            <person name="Feroli F."/>
            <person name="Feuermann M."/>
            <person name="Frontali L."/>
            <person name="Garcia-Gonzalez M."/>
            <person name="Garcia-Saez M.I."/>
            <person name="Goffeau A."/>
            <person name="Guerreiro P."/>
            <person name="Hani J."/>
            <person name="Hansen M."/>
            <person name="Hebling U."/>
            <person name="Hernandez K."/>
            <person name="Heumann K."/>
            <person name="Hilger F."/>
            <person name="Hofmann B."/>
            <person name="Indge K.J."/>
            <person name="James C.M."/>
            <person name="Klima R."/>
            <person name="Koetter P."/>
            <person name="Kramer B."/>
            <person name="Kramer W."/>
            <person name="Lauquin G."/>
            <person name="Leuther H."/>
            <person name="Louis E.J."/>
            <person name="Maillier E."/>
            <person name="Marconi A."/>
            <person name="Martegani E."/>
            <person name="Mazon M.J."/>
            <person name="Mazzoni C."/>
            <person name="McReynolds A.D.K."/>
            <person name="Melchioretto P."/>
            <person name="Mewes H.-W."/>
            <person name="Minenkova O."/>
            <person name="Mueller-Auer S."/>
            <person name="Nawrocki A."/>
            <person name="Netter P."/>
            <person name="Neu R."/>
            <person name="Nombela C."/>
            <person name="Oliver S.G."/>
            <person name="Panzeri L."/>
            <person name="Paoluzi S."/>
            <person name="Plevani P."/>
            <person name="Portetelle D."/>
            <person name="Portillo F."/>
            <person name="Potier S."/>
            <person name="Purnelle B."/>
            <person name="Rieger M."/>
            <person name="Riles L."/>
            <person name="Rinaldi T."/>
            <person name="Robben J."/>
            <person name="Rodrigues-Pousada C."/>
            <person name="Rodriguez-Belmonte E."/>
            <person name="Rodriguez-Torres A.M."/>
            <person name="Rose M."/>
            <person name="Ruzzi M."/>
            <person name="Saliola M."/>
            <person name="Sanchez-Perez M."/>
            <person name="Schaefer B."/>
            <person name="Schaefer M."/>
            <person name="Scharfe M."/>
            <person name="Schmidheini T."/>
            <person name="Schreer A."/>
            <person name="Skala J."/>
            <person name="Souciet J.-L."/>
            <person name="Steensma H.Y."/>
            <person name="Talla E."/>
            <person name="Thierry A."/>
            <person name="Vandenbol M."/>
            <person name="van der Aart Q.J.M."/>
            <person name="Van Dyck L."/>
            <person name="Vanoni M."/>
            <person name="Verhasselt P."/>
            <person name="Voet M."/>
            <person name="Volckaert G."/>
            <person name="Wambutt R."/>
            <person name="Watson M.D."/>
            <person name="Weber N."/>
            <person name="Wedler E."/>
            <person name="Wedler H."/>
            <person name="Wipfli P."/>
            <person name="Wolf K."/>
            <person name="Wright L.F."/>
            <person name="Zaccaria P."/>
            <person name="Zimmermann M."/>
            <person name="Zollner A."/>
            <person name="Kleine K."/>
        </authorList>
    </citation>
    <scope>NUCLEOTIDE SEQUENCE [LARGE SCALE GENOMIC DNA]</scope>
    <source>
        <strain>ATCC 204508 / S288c</strain>
    </source>
</reference>
<reference key="3">
    <citation type="journal article" date="2014" name="G3 (Bethesda)">
        <title>The reference genome sequence of Saccharomyces cerevisiae: Then and now.</title>
        <authorList>
            <person name="Engel S.R."/>
            <person name="Dietrich F.S."/>
            <person name="Fisk D.G."/>
            <person name="Binkley G."/>
            <person name="Balakrishnan R."/>
            <person name="Costanzo M.C."/>
            <person name="Dwight S.S."/>
            <person name="Hitz B.C."/>
            <person name="Karra K."/>
            <person name="Nash R.S."/>
            <person name="Weng S."/>
            <person name="Wong E.D."/>
            <person name="Lloyd P."/>
            <person name="Skrzypek M.S."/>
            <person name="Miyasato S.R."/>
            <person name="Simison M."/>
            <person name="Cherry J.M."/>
        </authorList>
    </citation>
    <scope>GENOME REANNOTATION</scope>
    <source>
        <strain>ATCC 204508 / S288c</strain>
    </source>
</reference>
<reference key="4">
    <citation type="journal article" date="1993" name="Proc. Natl. Acad. Sci. U.S.A.">
        <title>A protein complex of translational regulators of GCN4 mRNA is the guanine nucleotide-exchange factor for translation initiation factor 2 in yeast.</title>
        <authorList>
            <person name="Cigan A.M."/>
            <person name="Bushman J.L."/>
            <person name="Boal T.R."/>
            <person name="Hinnebusch A.G."/>
        </authorList>
    </citation>
    <scope>IDENTIFICATION IN THE EIF2-B COMPLEX</scope>
    <scope>FUNCTION OF THE EIF2-B COMPLEX</scope>
</reference>
<reference key="5">
    <citation type="journal article" date="1998" name="Genes Dev.">
        <title>eIF2 independently binds two distinct eIF2B subcomplexes that catalyze and regulate guanine-nucleotide exchange.</title>
        <authorList>
            <person name="Pavitt G.D."/>
            <person name="Ramaiah K.V."/>
            <person name="Kimball S.R."/>
            <person name="Hinnebusch A.G."/>
        </authorList>
    </citation>
    <scope>FUNCTION</scope>
    <scope>IDENTIFICATION IN A EIF2-B SUBCOMPLEX</scope>
</reference>
<reference key="6">
    <citation type="journal article" date="2003" name="Nature">
        <title>Global analysis of protein expression in yeast.</title>
        <authorList>
            <person name="Ghaemmaghami S."/>
            <person name="Huh W.-K."/>
            <person name="Bower K."/>
            <person name="Howson R.W."/>
            <person name="Belle A."/>
            <person name="Dephoure N."/>
            <person name="O'Shea E.K."/>
            <person name="Weissman J.S."/>
        </authorList>
    </citation>
    <scope>LEVEL OF PROTEIN EXPRESSION [LARGE SCALE ANALYSIS]</scope>
</reference>
<reference key="7">
    <citation type="journal article" date="2012" name="Proc. Natl. Acad. Sci. U.S.A.">
        <title>N-terminal acetylome analyses and functional insights of the N-terminal acetyltransferase NatB.</title>
        <authorList>
            <person name="Van Damme P."/>
            <person name="Lasa M."/>
            <person name="Polevoda B."/>
            <person name="Gazquez C."/>
            <person name="Elosegui-Artola A."/>
            <person name="Kim D.S."/>
            <person name="De Juan-Pardo E."/>
            <person name="Demeyer K."/>
            <person name="Hole K."/>
            <person name="Larrea E."/>
            <person name="Timmerman E."/>
            <person name="Prieto J."/>
            <person name="Arnesen T."/>
            <person name="Sherman F."/>
            <person name="Gevaert K."/>
            <person name="Aldabe R."/>
        </authorList>
    </citation>
    <scope>ACETYLATION [LARGE SCALE ANALYSIS] AT SER-2</scope>
    <scope>CLEAVAGE OF INITIATOR METHIONINE [LARGE SCALE ANALYSIS]</scope>
    <scope>IDENTIFICATION BY MASS SPECTROMETRY [LARGE SCALE ANALYSIS]</scope>
</reference>
<keyword id="KW-0002">3D-structure</keyword>
<keyword id="KW-0007">Acetylation</keyword>
<keyword id="KW-0963">Cytoplasm</keyword>
<keyword id="KW-0396">Initiation factor</keyword>
<keyword id="KW-0597">Phosphoprotein</keyword>
<keyword id="KW-0648">Protein biosynthesis</keyword>
<keyword id="KW-1185">Reference proteome</keyword>
<keyword id="KW-0678">Repressor</keyword>
<keyword id="KW-0810">Translation regulation</keyword>
<evidence type="ECO:0000250" key="1">
    <source>
        <dbReference type="UniProtKB" id="Q09924"/>
    </source>
</evidence>
<evidence type="ECO:0000255" key="2"/>
<evidence type="ECO:0000256" key="3">
    <source>
        <dbReference type="SAM" id="MobiDB-lite"/>
    </source>
</evidence>
<evidence type="ECO:0000269" key="4">
    <source>
    </source>
</evidence>
<evidence type="ECO:0000269" key="5">
    <source>
    </source>
</evidence>
<evidence type="ECO:0000269" key="6">
    <source>
    </source>
</evidence>
<evidence type="ECO:0000305" key="7"/>
<evidence type="ECO:0007744" key="8">
    <source>
    </source>
</evidence>
<name>EI2BD_YEAST</name>
<protein>
    <recommendedName>
        <fullName>Translation initiation factor eIF2B subunit delta</fullName>
    </recommendedName>
    <alternativeName>
        <fullName>GCD complex subunit GCD2</fullName>
    </alternativeName>
    <alternativeName>
        <fullName>Guanine nucleotide exchange factor subunit GCD2</fullName>
    </alternativeName>
    <alternativeName>
        <fullName>eIF2B GDP-GTP exchange factor subunit delta</fullName>
    </alternativeName>
</protein>
<dbReference type="EMBL" id="X15658">
    <property type="protein sequence ID" value="CAA33693.1"/>
    <property type="molecule type" value="Genomic_DNA"/>
</dbReference>
<dbReference type="EMBL" id="Z72868">
    <property type="protein sequence ID" value="CAA97085.1"/>
    <property type="molecule type" value="Genomic_DNA"/>
</dbReference>
<dbReference type="EMBL" id="BK006941">
    <property type="protein sequence ID" value="DAA08176.1"/>
    <property type="molecule type" value="Genomic_DNA"/>
</dbReference>
<dbReference type="PIR" id="S05809">
    <property type="entry name" value="RGBYD2"/>
</dbReference>
<dbReference type="RefSeq" id="NP_011597.1">
    <property type="nucleotide sequence ID" value="NM_001181212.1"/>
</dbReference>
<dbReference type="PDB" id="6I3M">
    <property type="method" value="EM"/>
    <property type="resolution" value="3.93 A"/>
    <property type="chains" value="C/D=1-651"/>
</dbReference>
<dbReference type="PDB" id="6I7T">
    <property type="method" value="EM"/>
    <property type="resolution" value="4.61 A"/>
    <property type="chains" value="C/D=1-651"/>
</dbReference>
<dbReference type="PDB" id="6QG0">
    <property type="method" value="EM"/>
    <property type="resolution" value="4.20 A"/>
    <property type="chains" value="G/H=1-651"/>
</dbReference>
<dbReference type="PDB" id="6QG1">
    <property type="method" value="EM"/>
    <property type="resolution" value="4.20 A"/>
    <property type="chains" value="G/H=1-651"/>
</dbReference>
<dbReference type="PDB" id="6QG2">
    <property type="method" value="EM"/>
    <property type="resolution" value="4.60 A"/>
    <property type="chains" value="G/H=1-651"/>
</dbReference>
<dbReference type="PDB" id="6QG3">
    <property type="method" value="EM"/>
    <property type="resolution" value="9.40 A"/>
    <property type="chains" value="G/H=1-651"/>
</dbReference>
<dbReference type="PDB" id="6QG5">
    <property type="method" value="EM"/>
    <property type="resolution" value="10.10 A"/>
    <property type="chains" value="G/H=1-651"/>
</dbReference>
<dbReference type="PDB" id="6QG6">
    <property type="method" value="EM"/>
    <property type="resolution" value="4.65 A"/>
    <property type="chains" value="G/H=1-651"/>
</dbReference>
<dbReference type="PDBsum" id="6I3M"/>
<dbReference type="PDBsum" id="6I7T"/>
<dbReference type="PDBsum" id="6QG0"/>
<dbReference type="PDBsum" id="6QG1"/>
<dbReference type="PDBsum" id="6QG2"/>
<dbReference type="PDBsum" id="6QG3"/>
<dbReference type="PDBsum" id="6QG5"/>
<dbReference type="PDBsum" id="6QG6"/>
<dbReference type="EMDB" id="EMD-4404"/>
<dbReference type="EMDB" id="EMD-4428"/>
<dbReference type="EMDB" id="EMD-4543"/>
<dbReference type="EMDB" id="EMD-4544"/>
<dbReference type="EMDB" id="EMD-4545"/>
<dbReference type="EMDB" id="EMD-4546"/>
<dbReference type="EMDB" id="EMD-4547"/>
<dbReference type="EMDB" id="EMD-4548"/>
<dbReference type="SMR" id="P12754"/>
<dbReference type="BioGRID" id="33325">
    <property type="interactions" value="144"/>
</dbReference>
<dbReference type="ComplexPortal" id="CPX-429">
    <property type="entry name" value="Eukaryotic translation initiation factor 2B complex"/>
</dbReference>
<dbReference type="DIP" id="DIP-2343N"/>
<dbReference type="FunCoup" id="P12754">
    <property type="interactions" value="950"/>
</dbReference>
<dbReference type="IntAct" id="P12754">
    <property type="interactions" value="33"/>
</dbReference>
<dbReference type="MINT" id="P12754"/>
<dbReference type="STRING" id="4932.YGR083C"/>
<dbReference type="GlyGen" id="P12754">
    <property type="glycosylation" value="3 sites, 1 O-linked glycan (3 sites)"/>
</dbReference>
<dbReference type="iPTMnet" id="P12754"/>
<dbReference type="PaxDb" id="4932-YGR083C"/>
<dbReference type="PeptideAtlas" id="P12754"/>
<dbReference type="EnsemblFungi" id="YGR083C_mRNA">
    <property type="protein sequence ID" value="YGR083C"/>
    <property type="gene ID" value="YGR083C"/>
</dbReference>
<dbReference type="GeneID" id="852974"/>
<dbReference type="KEGG" id="sce:YGR083C"/>
<dbReference type="AGR" id="SGD:S000003315"/>
<dbReference type="SGD" id="S000003315">
    <property type="gene designation" value="GCD2"/>
</dbReference>
<dbReference type="VEuPathDB" id="FungiDB:YGR083C"/>
<dbReference type="eggNOG" id="KOG1467">
    <property type="taxonomic scope" value="Eukaryota"/>
</dbReference>
<dbReference type="GeneTree" id="ENSGT00550000075009"/>
<dbReference type="HOGENOM" id="CLU_016218_3_4_1"/>
<dbReference type="InParanoid" id="P12754"/>
<dbReference type="OMA" id="IPRCIAM"/>
<dbReference type="OrthoDB" id="10254737at2759"/>
<dbReference type="BioCyc" id="YEAST:G3O-30795-MONOMER"/>
<dbReference type="Reactome" id="R-SCE-72731">
    <property type="pathway name" value="Recycling of eIF2:GDP"/>
</dbReference>
<dbReference type="BioGRID-ORCS" id="852974">
    <property type="hits" value="10 hits in 10 CRISPR screens"/>
</dbReference>
<dbReference type="CD-CODE" id="E03F929F">
    <property type="entry name" value="Stress granule"/>
</dbReference>
<dbReference type="PRO" id="PR:P12754"/>
<dbReference type="Proteomes" id="UP000002311">
    <property type="component" value="Chromosome VII"/>
</dbReference>
<dbReference type="RNAct" id="P12754">
    <property type="molecule type" value="protein"/>
</dbReference>
<dbReference type="GO" id="GO:0005829">
    <property type="term" value="C:cytosol"/>
    <property type="evidence" value="ECO:0007005"/>
    <property type="project" value="SGD"/>
</dbReference>
<dbReference type="GO" id="GO:0005851">
    <property type="term" value="C:eukaryotic translation initiation factor 2B complex"/>
    <property type="evidence" value="ECO:0000314"/>
    <property type="project" value="SGD"/>
</dbReference>
<dbReference type="GO" id="GO:0032045">
    <property type="term" value="C:guanyl-nucleotide exchange factor complex"/>
    <property type="evidence" value="ECO:0000314"/>
    <property type="project" value="ComplexPortal"/>
</dbReference>
<dbReference type="GO" id="GO:0030234">
    <property type="term" value="F:enzyme regulator activity"/>
    <property type="evidence" value="ECO:0000314"/>
    <property type="project" value="SGD"/>
</dbReference>
<dbReference type="GO" id="GO:0003743">
    <property type="term" value="F:translation initiation factor activity"/>
    <property type="evidence" value="ECO:0000315"/>
    <property type="project" value="SGD"/>
</dbReference>
<dbReference type="GO" id="GO:0002183">
    <property type="term" value="P:cytoplasmic translational initiation"/>
    <property type="evidence" value="ECO:0000250"/>
    <property type="project" value="UniProtKB"/>
</dbReference>
<dbReference type="GO" id="GO:0006446">
    <property type="term" value="P:regulation of translational initiation"/>
    <property type="evidence" value="ECO:0000314"/>
    <property type="project" value="SGD"/>
</dbReference>
<dbReference type="Gene3D" id="3.40.50.10470">
    <property type="entry name" value="Translation initiation factor eif-2b, domain 2"/>
    <property type="match status" value="1"/>
</dbReference>
<dbReference type="InterPro" id="IPR000649">
    <property type="entry name" value="IF-2B-related"/>
</dbReference>
<dbReference type="InterPro" id="IPR042529">
    <property type="entry name" value="IF_2B-like_C"/>
</dbReference>
<dbReference type="InterPro" id="IPR037171">
    <property type="entry name" value="NagB/RpiA_transferase-like"/>
</dbReference>
<dbReference type="PANTHER" id="PTHR10233">
    <property type="entry name" value="TRANSLATION INITIATION FACTOR EIF-2B"/>
    <property type="match status" value="1"/>
</dbReference>
<dbReference type="PANTHER" id="PTHR10233:SF14">
    <property type="entry name" value="TRANSLATION INITIATION FACTOR EIF-2B SUBUNIT DELTA"/>
    <property type="match status" value="1"/>
</dbReference>
<dbReference type="Pfam" id="PF01008">
    <property type="entry name" value="IF-2B"/>
    <property type="match status" value="1"/>
</dbReference>
<dbReference type="SUPFAM" id="SSF100950">
    <property type="entry name" value="NagB/RpiA/CoA transferase-like"/>
    <property type="match status" value="1"/>
</dbReference>
<accession>P12754</accession>
<accession>D6VUL5</accession>
<proteinExistence type="evidence at protein level"/>
<sequence length="651" mass="70852">MSESEAKSRSATPPSKAKQATPTTTAAANGEKKLTNKELKELKKQEKAAKRAAMKQANGISIEQQQQQAQMKKEKKQLQREQQQKREQKQKNANKKKQNERNVKKSTLFGHLETTEERRATILALTSAVSSPKTSRITAAGLMVPVVASALSGSNVLTASSLMPVGPNASSTVSASAPASTTTTLPASSAALSAGTSSASTNTPTAIQQEIASSNASDVAKTLASISLEAGEFNVIPGISSVIPTVLEQSFDNSSLISSVKELLLNKDLIHPSILLLTSHLAHYKIVGSIPRCIAMLEVFQIVIKDYQTPKGTTLSRNLTSYLSHQIDLLKKARPLSVTMGNAIRWLKQEISLIDPSTPDKAAKKDLCEKIGQFAKEKIELADQLIIDNASTQIEESTTIVTYGSSKVLTELLLHNAISLKKNIKVIVVDSRPLFEGRKMAETLRNAGVNVMYALITSLDTIFNMDVDYVFLGAHSILSNGFLYSRAGTAMLAMSAKRRNIPVLVCCESLKFSQRVQLDSVTFNELADPNDLVNIDYENPVERRGNKGALLNQFIKERKFEKKKLAMENKPKGNKIGGKKGSEGESKDASNEEDSNSKNILDGWQELPSLNIVNILYDLTPPEYIKKVITEFGALPPSSVPVILREYKGSA</sequence>
<comment type="function">
    <text evidence="1 5 6">Acts as a component of the translation initiation factor 2B (eIF2B) complex, which catalyzes the exchange of GDP for GTP on the eukaryotic initiation factor 2 (eIF2) complex gamma subunit. Its guanine nucleotide exchange factor activity is repressed when bound to eIF2 complex phosphorylated on the alpha subunit, thereby limiting the amount of methionyl-initiator methionine tRNA available to the ribosome and consequently global translation is repressed (By similarity). It activates the synthesis of GCN4 in yeast under amino acid starvation conditions by suppressing the inhibitory effects of multiple AUG codons present in the leader of GCN4 mRNA. It may promote either repression or activation of GCN4 expression depending on amino acid availability. GCD2 is also required for cell viability. Its function can partially be replaced by GCN3 under normal growth conditions in GCD2-defective mutants, under AA starvation conditions GCN3 is an antagonist (GCN4 translational activator).</text>
</comment>
<comment type="subunit">
    <text evidence="1 5 6">Component of the translation initiation factor 2B (eIF2B) complex which is a heterodecamer of two sets of five different subunits: alpha, beta, gamma, delta and epsilon. Subunits alpha, beta and delta comprise a regulatory subcomplex and subunits epsilon and gamma comprise a catalytic subcomplex (PubMed:8506384, PubMed:9472020). Within the complex, the hexameric regulatory complex resides at the center, with the two heterodimeric catalytic subcomplexes bound on opposite sides (By similarity).</text>
</comment>
<comment type="interaction">
    <interactant intactId="EBI-6265">
        <id>P12754</id>
    </interactant>
    <interactant intactId="EBI-6260">
        <id>P32502</id>
        <label>GCD7</label>
    </interactant>
    <organismsDiffer>false</organismsDiffer>
    <experiments>11</experiments>
</comment>
<comment type="interaction">
    <interactant intactId="EBI-6265">
        <id>P12754</id>
    </interactant>
    <interactant intactId="EBI-6253">
        <id>P14741</id>
        <label>GCN3</label>
    </interactant>
    <organismsDiffer>false</organismsDiffer>
    <experiments>8</experiments>
</comment>
<comment type="subcellular location">
    <subcellularLocation>
        <location evidence="1">Cytoplasm</location>
        <location evidence="1">Cytosol</location>
    </subcellularLocation>
</comment>
<comment type="miscellaneous">
    <text evidence="4">Present with 10300 molecules/cell in log phase SD medium.</text>
</comment>
<comment type="similarity">
    <text evidence="7">Belongs to the eIF-2B alpha/beta/delta subunits family.</text>
</comment>
<feature type="initiator methionine" description="Removed" evidence="8">
    <location>
        <position position="1"/>
    </location>
</feature>
<feature type="chain" id="PRO_0000156072" description="Translation initiation factor eIF2B subunit delta">
    <location>
        <begin position="2"/>
        <end position="651"/>
    </location>
</feature>
<feature type="region of interest" description="Disordered" evidence="3">
    <location>
        <begin position="1"/>
        <end position="108"/>
    </location>
</feature>
<feature type="region of interest" description="Disordered" evidence="3">
    <location>
        <begin position="566"/>
        <end position="600"/>
    </location>
</feature>
<feature type="compositionally biased region" description="Low complexity" evidence="3">
    <location>
        <begin position="11"/>
        <end position="28"/>
    </location>
</feature>
<feature type="compositionally biased region" description="Basic and acidic residues" evidence="3">
    <location>
        <begin position="30"/>
        <end position="49"/>
    </location>
</feature>
<feature type="compositionally biased region" description="Basic and acidic residues" evidence="3">
    <location>
        <begin position="76"/>
        <end position="90"/>
    </location>
</feature>
<feature type="compositionally biased region" description="Basic and acidic residues" evidence="3">
    <location>
        <begin position="580"/>
        <end position="590"/>
    </location>
</feature>
<feature type="modified residue" description="N-acetylserine" evidence="8">
    <location>
        <position position="2"/>
    </location>
</feature>
<feature type="modified residue" description="Phosphoserine" evidence="2">
    <location>
        <position position="106"/>
    </location>
</feature>
<feature type="modified residue" description="Phosphothreonine" evidence="2">
    <location>
        <position position="121"/>
    </location>
</feature>